<comment type="function">
    <text evidence="1 3">Required for MUC2 post-transcriptional synthesis and secretion. May play a role in the production of mucus by intestinal cells. Proto-oncogene that may play a role in cell migration, cell differentiation and cell growth (By similarity). Promotes cell adhesion (By similarity).</text>
</comment>
<comment type="subunit">
    <text evidence="3">Monomer and homodimer. Interacts with LYPD3 and DAG1 (alphaDAG1). Interacts with MUC2; disulfide-linked.</text>
</comment>
<comment type="subcellular location">
    <subcellularLocation>
        <location evidence="3">Secreted</location>
    </subcellularLocation>
    <subcellularLocation>
        <location evidence="2">Endoplasmic reticulum</location>
    </subcellularLocation>
</comment>
<comment type="similarity">
    <text evidence="4">Belongs to the AGR family.</text>
</comment>
<keyword id="KW-1015">Disulfide bond</keyword>
<keyword id="KW-0256">Endoplasmic reticulum</keyword>
<keyword id="KW-0656">Proto-oncogene</keyword>
<keyword id="KW-1185">Reference proteome</keyword>
<keyword id="KW-0964">Secreted</keyword>
<keyword id="KW-0732">Signal</keyword>
<sequence>MEKISVSAFLLLVALSYTLARDTTVKPAAKKDTKDSRPKLPQTLSRGWGDQLIWTQTYEEALYKSKTSNKPLMIIHHLDECPHSQALKKVFAENKEIQKLAEQFVLLNLVYETTDKHLSPDGQYVPRIMFVDPSLTVRADITGRYSNRLYAYEPTDTALLLDNMKKALKLLKTEL</sequence>
<evidence type="ECO:0000250" key="1"/>
<evidence type="ECO:0000250" key="2">
    <source>
        <dbReference type="UniProtKB" id="O88312"/>
    </source>
</evidence>
<evidence type="ECO:0000250" key="3">
    <source>
        <dbReference type="UniProtKB" id="O95994"/>
    </source>
</evidence>
<evidence type="ECO:0000305" key="4"/>
<accession>Q5R7P1</accession>
<feature type="signal peptide" evidence="3">
    <location>
        <begin position="1"/>
        <end position="20"/>
    </location>
</feature>
<feature type="chain" id="PRO_0000001039" description="Anterior gradient protein 2 homolog">
    <location>
        <begin position="21"/>
        <end position="175"/>
    </location>
</feature>
<feature type="region of interest" description="Required to promote cell adhesion" evidence="3">
    <location>
        <begin position="21"/>
        <end position="40"/>
    </location>
</feature>
<feature type="short sequence motif" description="Homodimer stabilization; interchain" evidence="3">
    <location>
        <begin position="45"/>
        <end position="54"/>
    </location>
</feature>
<feature type="short sequence motif" description="Homodimer stabilization; interchain" evidence="3">
    <location>
        <begin position="60"/>
        <end position="67"/>
    </location>
</feature>
<gene>
    <name type="primary">AGR2</name>
</gene>
<name>AGR2_PONAB</name>
<protein>
    <recommendedName>
        <fullName>Anterior gradient protein 2 homolog</fullName>
    </recommendedName>
</protein>
<reference key="1">
    <citation type="submission" date="2004-11" db="EMBL/GenBank/DDBJ databases">
        <authorList>
            <consortium name="The German cDNA consortium"/>
        </authorList>
    </citation>
    <scope>NUCLEOTIDE SEQUENCE [LARGE SCALE MRNA]</scope>
    <source>
        <tissue>Kidney</tissue>
    </source>
</reference>
<proteinExistence type="evidence at transcript level"/>
<dbReference type="EMBL" id="CR860071">
    <property type="protein sequence ID" value="CAH92219.1"/>
    <property type="molecule type" value="mRNA"/>
</dbReference>
<dbReference type="RefSeq" id="NP_001127525.1">
    <property type="nucleotide sequence ID" value="NM_001134053.1"/>
</dbReference>
<dbReference type="BMRB" id="Q5R7P1"/>
<dbReference type="SMR" id="Q5R7P1"/>
<dbReference type="FunCoup" id="Q5R7P1">
    <property type="interactions" value="431"/>
</dbReference>
<dbReference type="STRING" id="9601.ENSPPYP00000019909"/>
<dbReference type="Ensembl" id="ENSPPYT00000020695.2">
    <property type="protein sequence ID" value="ENSPPYP00000019909.2"/>
    <property type="gene ID" value="ENSPPYG00000017761.2"/>
</dbReference>
<dbReference type="GeneID" id="100174601"/>
<dbReference type="KEGG" id="pon:100174601"/>
<dbReference type="CTD" id="10551"/>
<dbReference type="eggNOG" id="ENOG502RYQ8">
    <property type="taxonomic scope" value="Eukaryota"/>
</dbReference>
<dbReference type="GeneTree" id="ENSGT00530000063273"/>
<dbReference type="HOGENOM" id="CLU_088048_1_1_1"/>
<dbReference type="InParanoid" id="Q5R7P1"/>
<dbReference type="OrthoDB" id="262308at2759"/>
<dbReference type="Proteomes" id="UP000001595">
    <property type="component" value="Chromosome 7"/>
</dbReference>
<dbReference type="GO" id="GO:0005783">
    <property type="term" value="C:endoplasmic reticulum"/>
    <property type="evidence" value="ECO:0000250"/>
    <property type="project" value="UniProtKB"/>
</dbReference>
<dbReference type="GO" id="GO:0005576">
    <property type="term" value="C:extracellular region"/>
    <property type="evidence" value="ECO:0000250"/>
    <property type="project" value="UniProtKB"/>
</dbReference>
<dbReference type="GO" id="GO:0002162">
    <property type="term" value="F:dystroglycan binding"/>
    <property type="evidence" value="ECO:0007669"/>
    <property type="project" value="TreeGrafter"/>
</dbReference>
<dbReference type="GO" id="GO:0042802">
    <property type="term" value="F:identical protein binding"/>
    <property type="evidence" value="ECO:0000250"/>
    <property type="project" value="UniProtKB"/>
</dbReference>
<dbReference type="GO" id="GO:0070254">
    <property type="term" value="P:mucus secretion"/>
    <property type="evidence" value="ECO:0000250"/>
    <property type="project" value="UniProtKB"/>
</dbReference>
<dbReference type="GO" id="GO:0010811">
    <property type="term" value="P:positive regulation of cell-substrate adhesion"/>
    <property type="evidence" value="ECO:0000250"/>
    <property type="project" value="UniProtKB"/>
</dbReference>
<dbReference type="CDD" id="cd02960">
    <property type="entry name" value="AGR"/>
    <property type="match status" value="1"/>
</dbReference>
<dbReference type="FunFam" id="3.40.30.10:FF:000036">
    <property type="entry name" value="anterior gradient protein 2 homolog"/>
    <property type="match status" value="1"/>
</dbReference>
<dbReference type="Gene3D" id="3.40.30.10">
    <property type="entry name" value="Glutaredoxin"/>
    <property type="match status" value="1"/>
</dbReference>
<dbReference type="InterPro" id="IPR051099">
    <property type="entry name" value="AGR/TXD"/>
</dbReference>
<dbReference type="InterPro" id="IPR036249">
    <property type="entry name" value="Thioredoxin-like_sf"/>
</dbReference>
<dbReference type="PANTHER" id="PTHR15337:SF1">
    <property type="entry name" value="ANTERIOR GRADIENT PROTEIN 2 HOMOLOG"/>
    <property type="match status" value="1"/>
</dbReference>
<dbReference type="PANTHER" id="PTHR15337">
    <property type="entry name" value="ANTERIOR GRADIENT PROTEIN-RELATED"/>
    <property type="match status" value="1"/>
</dbReference>
<dbReference type="Pfam" id="PF13899">
    <property type="entry name" value="Thioredoxin_7"/>
    <property type="match status" value="1"/>
</dbReference>
<dbReference type="SUPFAM" id="SSF52833">
    <property type="entry name" value="Thioredoxin-like"/>
    <property type="match status" value="1"/>
</dbReference>
<organism>
    <name type="scientific">Pongo abelii</name>
    <name type="common">Sumatran orangutan</name>
    <name type="synonym">Pongo pygmaeus abelii</name>
    <dbReference type="NCBI Taxonomy" id="9601"/>
    <lineage>
        <taxon>Eukaryota</taxon>
        <taxon>Metazoa</taxon>
        <taxon>Chordata</taxon>
        <taxon>Craniata</taxon>
        <taxon>Vertebrata</taxon>
        <taxon>Euteleostomi</taxon>
        <taxon>Mammalia</taxon>
        <taxon>Eutheria</taxon>
        <taxon>Euarchontoglires</taxon>
        <taxon>Primates</taxon>
        <taxon>Haplorrhini</taxon>
        <taxon>Catarrhini</taxon>
        <taxon>Hominidae</taxon>
        <taxon>Pongo</taxon>
    </lineage>
</organism>